<comment type="similarity">
    <text evidence="1">Belongs to the bacterial ribosomal protein bL28 family.</text>
</comment>
<sequence>MAKCFVTGKKKSFGNSRSHAMNANKRTWKVNLQKVRILVDGKPKRVWVSARALKSGKVQRV</sequence>
<reference key="1">
    <citation type="submission" date="2009-06" db="EMBL/GenBank/DDBJ databases">
        <title>Complete sequence of chromosome of Geopacillus sp. WCH70.</title>
        <authorList>
            <consortium name="US DOE Joint Genome Institute"/>
            <person name="Lucas S."/>
            <person name="Copeland A."/>
            <person name="Lapidus A."/>
            <person name="Glavina del Rio T."/>
            <person name="Dalin E."/>
            <person name="Tice H."/>
            <person name="Bruce D."/>
            <person name="Goodwin L."/>
            <person name="Pitluck S."/>
            <person name="Chertkov O."/>
            <person name="Brettin T."/>
            <person name="Detter J.C."/>
            <person name="Han C."/>
            <person name="Larimer F."/>
            <person name="Land M."/>
            <person name="Hauser L."/>
            <person name="Kyrpides N."/>
            <person name="Mikhailova N."/>
            <person name="Brumm P."/>
            <person name="Mead D.A."/>
            <person name="Richardson P."/>
        </authorList>
    </citation>
    <scope>NUCLEOTIDE SEQUENCE [LARGE SCALE GENOMIC DNA]</scope>
    <source>
        <strain>WCH70</strain>
    </source>
</reference>
<accession>C5D8S5</accession>
<keyword id="KW-0687">Ribonucleoprotein</keyword>
<keyword id="KW-0689">Ribosomal protein</keyword>
<name>RL28_GEOSW</name>
<protein>
    <recommendedName>
        <fullName evidence="1">Large ribosomal subunit protein bL28</fullName>
    </recommendedName>
    <alternativeName>
        <fullName evidence="2">50S ribosomal protein L28</fullName>
    </alternativeName>
</protein>
<organism>
    <name type="scientific">Geobacillus sp. (strain WCH70)</name>
    <dbReference type="NCBI Taxonomy" id="471223"/>
    <lineage>
        <taxon>Bacteria</taxon>
        <taxon>Bacillati</taxon>
        <taxon>Bacillota</taxon>
        <taxon>Bacilli</taxon>
        <taxon>Bacillales</taxon>
        <taxon>Anoxybacillaceae</taxon>
        <taxon>Geobacillus</taxon>
    </lineage>
</organism>
<feature type="chain" id="PRO_1000205601" description="Large ribosomal subunit protein bL28">
    <location>
        <begin position="1"/>
        <end position="61"/>
    </location>
</feature>
<gene>
    <name evidence="1" type="primary">rpmB</name>
    <name type="ordered locus">GWCH70_1072</name>
</gene>
<evidence type="ECO:0000255" key="1">
    <source>
        <dbReference type="HAMAP-Rule" id="MF_00373"/>
    </source>
</evidence>
<evidence type="ECO:0000305" key="2"/>
<proteinExistence type="inferred from homology"/>
<dbReference type="EMBL" id="CP001638">
    <property type="protein sequence ID" value="ACS23932.1"/>
    <property type="molecule type" value="Genomic_DNA"/>
</dbReference>
<dbReference type="SMR" id="C5D8S5"/>
<dbReference type="STRING" id="471223.GWCH70_1072"/>
<dbReference type="KEGG" id="gwc:GWCH70_1072"/>
<dbReference type="eggNOG" id="COG0227">
    <property type="taxonomic scope" value="Bacteria"/>
</dbReference>
<dbReference type="HOGENOM" id="CLU_064548_7_1_9"/>
<dbReference type="OrthoDB" id="9805609at2"/>
<dbReference type="GO" id="GO:1990904">
    <property type="term" value="C:ribonucleoprotein complex"/>
    <property type="evidence" value="ECO:0007669"/>
    <property type="project" value="UniProtKB-KW"/>
</dbReference>
<dbReference type="GO" id="GO:0005840">
    <property type="term" value="C:ribosome"/>
    <property type="evidence" value="ECO:0007669"/>
    <property type="project" value="UniProtKB-KW"/>
</dbReference>
<dbReference type="GO" id="GO:0003735">
    <property type="term" value="F:structural constituent of ribosome"/>
    <property type="evidence" value="ECO:0007669"/>
    <property type="project" value="InterPro"/>
</dbReference>
<dbReference type="GO" id="GO:0006412">
    <property type="term" value="P:translation"/>
    <property type="evidence" value="ECO:0007669"/>
    <property type="project" value="UniProtKB-UniRule"/>
</dbReference>
<dbReference type="Gene3D" id="2.30.170.40">
    <property type="entry name" value="Ribosomal protein L28/L24"/>
    <property type="match status" value="1"/>
</dbReference>
<dbReference type="HAMAP" id="MF_00373">
    <property type="entry name" value="Ribosomal_bL28"/>
    <property type="match status" value="1"/>
</dbReference>
<dbReference type="InterPro" id="IPR050096">
    <property type="entry name" value="Bacterial_rp_bL28"/>
</dbReference>
<dbReference type="InterPro" id="IPR026569">
    <property type="entry name" value="Ribosomal_bL28"/>
</dbReference>
<dbReference type="InterPro" id="IPR034704">
    <property type="entry name" value="Ribosomal_bL28/bL31-like_sf"/>
</dbReference>
<dbReference type="InterPro" id="IPR001383">
    <property type="entry name" value="Ribosomal_bL28_bact-type"/>
</dbReference>
<dbReference type="InterPro" id="IPR037147">
    <property type="entry name" value="Ribosomal_bL28_sf"/>
</dbReference>
<dbReference type="NCBIfam" id="TIGR00009">
    <property type="entry name" value="L28"/>
    <property type="match status" value="1"/>
</dbReference>
<dbReference type="PANTHER" id="PTHR39080">
    <property type="entry name" value="50S RIBOSOMAL PROTEIN L28"/>
    <property type="match status" value="1"/>
</dbReference>
<dbReference type="PANTHER" id="PTHR39080:SF1">
    <property type="entry name" value="LARGE RIBOSOMAL SUBUNIT PROTEIN BL28A"/>
    <property type="match status" value="1"/>
</dbReference>
<dbReference type="Pfam" id="PF00830">
    <property type="entry name" value="Ribosomal_L28"/>
    <property type="match status" value="1"/>
</dbReference>
<dbReference type="SUPFAM" id="SSF143800">
    <property type="entry name" value="L28p-like"/>
    <property type="match status" value="1"/>
</dbReference>